<protein>
    <recommendedName>
        <fullName evidence="1">Ribonuclease PH</fullName>
        <shortName evidence="1">RNase PH</shortName>
        <ecNumber evidence="1">2.7.7.56</ecNumber>
    </recommendedName>
    <alternativeName>
        <fullName evidence="1">tRNA nucleotidyltransferase</fullName>
    </alternativeName>
</protein>
<comment type="function">
    <text evidence="1">Phosphorolytic 3'-5' exoribonuclease that plays an important role in tRNA 3'-end maturation. Removes nucleotide residues following the 3'-CCA terminus of tRNAs; can also add nucleotides to the ends of RNA molecules by using nucleoside diphosphates as substrates, but this may not be physiologically important. Probably plays a role in initiation of 16S rRNA degradation (leading to ribosome degradation) during starvation.</text>
</comment>
<comment type="catalytic activity">
    <reaction evidence="1">
        <text>tRNA(n+1) + phosphate = tRNA(n) + a ribonucleoside 5'-diphosphate</text>
        <dbReference type="Rhea" id="RHEA:10628"/>
        <dbReference type="Rhea" id="RHEA-COMP:17343"/>
        <dbReference type="Rhea" id="RHEA-COMP:17344"/>
        <dbReference type="ChEBI" id="CHEBI:43474"/>
        <dbReference type="ChEBI" id="CHEBI:57930"/>
        <dbReference type="ChEBI" id="CHEBI:173114"/>
        <dbReference type="EC" id="2.7.7.56"/>
    </reaction>
</comment>
<comment type="subunit">
    <text evidence="1">Homohexameric ring arranged as a trimer of dimers.</text>
</comment>
<comment type="similarity">
    <text evidence="1">Belongs to the RNase PH family.</text>
</comment>
<sequence>MRPSGRTASQIRPVTITRQYTCHAEGSVLVEFGNTKVLCNATVEEGVPRFMKGQGKGWVTAEYSMLPRATHTRSGREAARGKQGGRTLEIQRLIARSLRAALDLKLLGENTITLDCDVIQADGGTRTASITGACVALVDALTYMRSKGIIKTNPLKHMIAALSVGIYEGTPIADLEYTEDSEAETDMNIVMTETGKLIEVQGTAEGEPFSFEELDELLKIGKHGLRELFDIQKAALA</sequence>
<reference key="1">
    <citation type="journal article" date="2008" name="ISME J.">
        <title>Comparative genomics of two ecotypes of the marine planktonic copiotroph Alteromonas macleodii suggests alternative lifestyles associated with different kinds of particulate organic matter.</title>
        <authorList>
            <person name="Ivars-Martinez E."/>
            <person name="Martin-Cuadrado A.-B."/>
            <person name="D'Auria G."/>
            <person name="Mira A."/>
            <person name="Ferriera S."/>
            <person name="Johnson J."/>
            <person name="Friedman R."/>
            <person name="Rodriguez-Valera F."/>
        </authorList>
    </citation>
    <scope>NUCLEOTIDE SEQUENCE [LARGE SCALE GENOMIC DNA]</scope>
    <source>
        <strain>DSM 17117 / CIP 110805 / LMG 28347 / Deep ecotype</strain>
    </source>
</reference>
<gene>
    <name evidence="1" type="primary">rph1</name>
    <name type="ordered locus">MADE_1011200</name>
</gene>
<gene>
    <name evidence="1" type="primary">rph2</name>
    <name type="ordered locus">MADE_1020280</name>
</gene>
<organism>
    <name type="scientific">Alteromonas mediterranea (strain DSM 17117 / CIP 110805 / LMG 28347 / Deep ecotype)</name>
    <dbReference type="NCBI Taxonomy" id="1774373"/>
    <lineage>
        <taxon>Bacteria</taxon>
        <taxon>Pseudomonadati</taxon>
        <taxon>Pseudomonadota</taxon>
        <taxon>Gammaproteobacteria</taxon>
        <taxon>Alteromonadales</taxon>
        <taxon>Alteromonadaceae</taxon>
        <taxon>Alteromonas/Salinimonas group</taxon>
        <taxon>Alteromonas</taxon>
    </lineage>
</organism>
<keyword id="KW-0548">Nucleotidyltransferase</keyword>
<keyword id="KW-0694">RNA-binding</keyword>
<keyword id="KW-0698">rRNA processing</keyword>
<keyword id="KW-0808">Transferase</keyword>
<keyword id="KW-0819">tRNA processing</keyword>
<keyword id="KW-0820">tRNA-binding</keyword>
<feature type="chain" id="PRO_1000129315" description="Ribonuclease PH">
    <location>
        <begin position="1"/>
        <end position="237"/>
    </location>
</feature>
<feature type="binding site" evidence="1">
    <location>
        <position position="86"/>
    </location>
    <ligand>
        <name>phosphate</name>
        <dbReference type="ChEBI" id="CHEBI:43474"/>
        <note>substrate</note>
    </ligand>
</feature>
<feature type="binding site" evidence="1">
    <location>
        <begin position="124"/>
        <end position="126"/>
    </location>
    <ligand>
        <name>phosphate</name>
        <dbReference type="ChEBI" id="CHEBI:43474"/>
        <note>substrate</note>
    </ligand>
</feature>
<evidence type="ECO:0000255" key="1">
    <source>
        <dbReference type="HAMAP-Rule" id="MF_00564"/>
    </source>
</evidence>
<accession>B4S201</accession>
<accession>F2G489</accession>
<name>RNPH_ALTMD</name>
<proteinExistence type="inferred from homology"/>
<dbReference type="EC" id="2.7.7.56" evidence="1"/>
<dbReference type="EMBL" id="CP001103">
    <property type="protein sequence ID" value="AEA98376.1"/>
    <property type="molecule type" value="Genomic_DNA"/>
</dbReference>
<dbReference type="EMBL" id="CP001103">
    <property type="protein sequence ID" value="AEB00179.1"/>
    <property type="molecule type" value="Genomic_DNA"/>
</dbReference>
<dbReference type="SMR" id="B4S201"/>
<dbReference type="KEGG" id="amc:MADE_1020280"/>
<dbReference type="HOGENOM" id="CLU_050858_0_0_6"/>
<dbReference type="Proteomes" id="UP000001870">
    <property type="component" value="Chromosome"/>
</dbReference>
<dbReference type="GO" id="GO:0000175">
    <property type="term" value="F:3'-5'-RNA exonuclease activity"/>
    <property type="evidence" value="ECO:0007669"/>
    <property type="project" value="UniProtKB-UniRule"/>
</dbReference>
<dbReference type="GO" id="GO:0000049">
    <property type="term" value="F:tRNA binding"/>
    <property type="evidence" value="ECO:0007669"/>
    <property type="project" value="UniProtKB-UniRule"/>
</dbReference>
<dbReference type="GO" id="GO:0009022">
    <property type="term" value="F:tRNA nucleotidyltransferase activity"/>
    <property type="evidence" value="ECO:0007669"/>
    <property type="project" value="UniProtKB-UniRule"/>
</dbReference>
<dbReference type="GO" id="GO:0016075">
    <property type="term" value="P:rRNA catabolic process"/>
    <property type="evidence" value="ECO:0007669"/>
    <property type="project" value="UniProtKB-UniRule"/>
</dbReference>
<dbReference type="GO" id="GO:0006364">
    <property type="term" value="P:rRNA processing"/>
    <property type="evidence" value="ECO:0007669"/>
    <property type="project" value="UniProtKB-KW"/>
</dbReference>
<dbReference type="GO" id="GO:0008033">
    <property type="term" value="P:tRNA processing"/>
    <property type="evidence" value="ECO:0007669"/>
    <property type="project" value="UniProtKB-UniRule"/>
</dbReference>
<dbReference type="CDD" id="cd11362">
    <property type="entry name" value="RNase_PH_bact"/>
    <property type="match status" value="1"/>
</dbReference>
<dbReference type="FunFam" id="3.30.230.70:FF:000003">
    <property type="entry name" value="Ribonuclease PH"/>
    <property type="match status" value="1"/>
</dbReference>
<dbReference type="Gene3D" id="3.30.230.70">
    <property type="entry name" value="GHMP Kinase, N-terminal domain"/>
    <property type="match status" value="1"/>
</dbReference>
<dbReference type="HAMAP" id="MF_00564">
    <property type="entry name" value="RNase_PH"/>
    <property type="match status" value="1"/>
</dbReference>
<dbReference type="InterPro" id="IPR001247">
    <property type="entry name" value="ExoRNase_PH_dom1"/>
</dbReference>
<dbReference type="InterPro" id="IPR015847">
    <property type="entry name" value="ExoRNase_PH_dom2"/>
</dbReference>
<dbReference type="InterPro" id="IPR036345">
    <property type="entry name" value="ExoRNase_PH_dom2_sf"/>
</dbReference>
<dbReference type="InterPro" id="IPR027408">
    <property type="entry name" value="PNPase/RNase_PH_dom_sf"/>
</dbReference>
<dbReference type="InterPro" id="IPR020568">
    <property type="entry name" value="Ribosomal_Su5_D2-typ_SF"/>
</dbReference>
<dbReference type="InterPro" id="IPR050080">
    <property type="entry name" value="RNase_PH"/>
</dbReference>
<dbReference type="InterPro" id="IPR002381">
    <property type="entry name" value="RNase_PH_bac-type"/>
</dbReference>
<dbReference type="InterPro" id="IPR018336">
    <property type="entry name" value="RNase_PH_CS"/>
</dbReference>
<dbReference type="NCBIfam" id="TIGR01966">
    <property type="entry name" value="RNasePH"/>
    <property type="match status" value="1"/>
</dbReference>
<dbReference type="PANTHER" id="PTHR11953">
    <property type="entry name" value="EXOSOME COMPLEX COMPONENT"/>
    <property type="match status" value="1"/>
</dbReference>
<dbReference type="PANTHER" id="PTHR11953:SF0">
    <property type="entry name" value="EXOSOME COMPLEX COMPONENT RRP41"/>
    <property type="match status" value="1"/>
</dbReference>
<dbReference type="Pfam" id="PF01138">
    <property type="entry name" value="RNase_PH"/>
    <property type="match status" value="1"/>
</dbReference>
<dbReference type="Pfam" id="PF03725">
    <property type="entry name" value="RNase_PH_C"/>
    <property type="match status" value="1"/>
</dbReference>
<dbReference type="SUPFAM" id="SSF55666">
    <property type="entry name" value="Ribonuclease PH domain 2-like"/>
    <property type="match status" value="1"/>
</dbReference>
<dbReference type="SUPFAM" id="SSF54211">
    <property type="entry name" value="Ribosomal protein S5 domain 2-like"/>
    <property type="match status" value="1"/>
</dbReference>
<dbReference type="PROSITE" id="PS01277">
    <property type="entry name" value="RIBONUCLEASE_PH"/>
    <property type="match status" value="1"/>
</dbReference>